<organism>
    <name type="scientific">Vitis vinifera</name>
    <name type="common">Grape</name>
    <dbReference type="NCBI Taxonomy" id="29760"/>
    <lineage>
        <taxon>Eukaryota</taxon>
        <taxon>Viridiplantae</taxon>
        <taxon>Streptophyta</taxon>
        <taxon>Embryophyta</taxon>
        <taxon>Tracheophyta</taxon>
        <taxon>Spermatophyta</taxon>
        <taxon>Magnoliopsida</taxon>
        <taxon>eudicotyledons</taxon>
        <taxon>Gunneridae</taxon>
        <taxon>Pentapetalae</taxon>
        <taxon>rosids</taxon>
        <taxon>Vitales</taxon>
        <taxon>Vitaceae</taxon>
        <taxon>Viteae</taxon>
        <taxon>Vitis</taxon>
    </lineage>
</organism>
<reference key="1">
    <citation type="journal article" date="2004" name="Nucleic Acids Res.">
        <title>Rapid evolution of RNA editing sites in a small non-essential plastid gene.</title>
        <authorList>
            <person name="Fiebig A."/>
            <person name="Stegemann S."/>
            <person name="Bock R."/>
        </authorList>
    </citation>
    <scope>NUCLEOTIDE SEQUENCE [GENOMIC DNA]</scope>
    <scope>RNA EDITING</scope>
    <source>
        <tissue>Leaf</tissue>
    </source>
</reference>
<reference key="2">
    <citation type="journal article" date="2006" name="BMC Evol. Biol.">
        <title>Phylogenetic analyses of Vitis (Vitaceae) based on complete chloroplast genome sequences: effects of taxon sampling and phylogenetic methods on resolving relationships among rosids.</title>
        <authorList>
            <person name="Jansen R.K."/>
            <person name="Kaittanis C."/>
            <person name="Lee S.-B."/>
            <person name="Saski C."/>
            <person name="Tomkins J."/>
            <person name="Alverson A.J."/>
            <person name="Daniell H."/>
        </authorList>
    </citation>
    <scope>NUCLEOTIDE SEQUENCE [LARGE SCALE GENOMIC DNA]</scope>
    <source>
        <strain>cv. Maxxa</strain>
    </source>
</reference>
<sequence length="31" mass="3417">MLTITSYFGFLLAALTITSVLFIGLSKIRLI</sequence>
<keyword id="KW-0150">Chloroplast</keyword>
<keyword id="KW-0249">Electron transport</keyword>
<keyword id="KW-0472">Membrane</keyword>
<keyword id="KW-0602">Photosynthesis</keyword>
<keyword id="KW-0934">Plastid</keyword>
<keyword id="KW-1185">Reference proteome</keyword>
<keyword id="KW-0691">RNA editing</keyword>
<keyword id="KW-0793">Thylakoid</keyword>
<keyword id="KW-0812">Transmembrane</keyword>
<keyword id="KW-1133">Transmembrane helix</keyword>
<keyword id="KW-0813">Transport</keyword>
<geneLocation type="chloroplast"/>
<dbReference type="EMBL" id="AJ704442">
    <property type="protein sequence ID" value="CAG28654.1"/>
    <property type="molecule type" value="Genomic_DNA"/>
</dbReference>
<dbReference type="EMBL" id="DQ424856">
    <property type="protein sequence ID" value="ABE47552.1"/>
    <property type="status" value="ALT_SEQ"/>
    <property type="molecule type" value="Genomic_DNA"/>
</dbReference>
<dbReference type="RefSeq" id="YP_002608391.1">
    <property type="nucleotide sequence ID" value="NC_012119.1"/>
</dbReference>
<dbReference type="RefSeq" id="YP_567094.1">
    <property type="nucleotide sequence ID" value="NC_007957.1"/>
</dbReference>
<dbReference type="SMR" id="Q5K3S2"/>
<dbReference type="STRING" id="29760.Q5K3S2"/>
<dbReference type="GeneID" id="4025055"/>
<dbReference type="GeneID" id="7498575"/>
<dbReference type="KEGG" id="vvi:4025055"/>
<dbReference type="KEGG" id="vvi:7498575"/>
<dbReference type="InParanoid" id="Q5K3S2"/>
<dbReference type="OrthoDB" id="800571at71240"/>
<dbReference type="Proteomes" id="UP000009183">
    <property type="component" value="Chloroplast"/>
</dbReference>
<dbReference type="GO" id="GO:0009535">
    <property type="term" value="C:chloroplast thylakoid membrane"/>
    <property type="evidence" value="ECO:0007669"/>
    <property type="project" value="UniProtKB-SubCell"/>
</dbReference>
<dbReference type="GO" id="GO:0009512">
    <property type="term" value="C:cytochrome b6f complex"/>
    <property type="evidence" value="ECO:0007669"/>
    <property type="project" value="InterPro"/>
</dbReference>
<dbReference type="GO" id="GO:0045158">
    <property type="term" value="F:electron transporter, transferring electrons within cytochrome b6/f complex of photosystem II activity"/>
    <property type="evidence" value="ECO:0007669"/>
    <property type="project" value="UniProtKB-UniRule"/>
</dbReference>
<dbReference type="GO" id="GO:0015979">
    <property type="term" value="P:photosynthesis"/>
    <property type="evidence" value="ECO:0007669"/>
    <property type="project" value="UniProtKB-KW"/>
</dbReference>
<dbReference type="HAMAP" id="MF_00433">
    <property type="entry name" value="Cytb6_f_PetL"/>
    <property type="match status" value="1"/>
</dbReference>
<dbReference type="InterPro" id="IPR007802">
    <property type="entry name" value="Cyt_b6/f_cplx_su6"/>
</dbReference>
<dbReference type="PANTHER" id="PTHR37266">
    <property type="entry name" value="CYTOCHROME B6-F COMPLEX SUBUNIT 6"/>
    <property type="match status" value="1"/>
</dbReference>
<dbReference type="PANTHER" id="PTHR37266:SF1">
    <property type="entry name" value="CYTOCHROME B6-F COMPLEX SUBUNIT 6"/>
    <property type="match status" value="1"/>
</dbReference>
<dbReference type="Pfam" id="PF05115">
    <property type="entry name" value="PetL"/>
    <property type="match status" value="1"/>
</dbReference>
<dbReference type="SUPFAM" id="SSF103436">
    <property type="entry name" value="PetL subunit of the cytochrome b6f complex"/>
    <property type="match status" value="1"/>
</dbReference>
<evidence type="ECO:0000255" key="1">
    <source>
        <dbReference type="HAMAP-Rule" id="MF_00433"/>
    </source>
</evidence>
<evidence type="ECO:0000269" key="2">
    <source>
    </source>
</evidence>
<protein>
    <recommendedName>
        <fullName evidence="1">Cytochrome b6-f complex subunit 6</fullName>
    </recommendedName>
    <alternativeName>
        <fullName evidence="1">Cytochrome b6-f complex subunit PetL</fullName>
    </alternativeName>
    <alternativeName>
        <fullName evidence="1">Cytochrome b6-f complex subunit VI</fullName>
    </alternativeName>
</protein>
<proteinExistence type="evidence at transcript level"/>
<accession>Q5K3S2</accession>
<accession>Q0ZJ02</accession>
<name>PETL_VITVI</name>
<gene>
    <name evidence="1" type="primary">petL</name>
</gene>
<feature type="chain" id="PRO_0000220483" description="Cytochrome b6-f complex subunit 6">
    <location>
        <begin position="1"/>
        <end position="31"/>
    </location>
</feature>
<feature type="transmembrane region" description="Helical" evidence="1">
    <location>
        <begin position="4"/>
        <end position="24"/>
    </location>
</feature>
<comment type="function">
    <text evidence="1">Component of the cytochrome b6-f complex, which mediates electron transfer between photosystem II (PSII) and photosystem I (PSI), cyclic electron flow around PSI, and state transitions. PetL is important for photoautotrophic growth as well as for electron transfer efficiency and stability of the cytochrome b6-f complex.</text>
</comment>
<comment type="subunit">
    <text evidence="1">The 4 large subunits of the cytochrome b6-f complex are cytochrome b6, subunit IV (17 kDa polypeptide, PetD), cytochrome f and the Rieske protein, while the 4 small subunits are PetG, PetL, PetM and PetN. The complex functions as a dimer.</text>
</comment>
<comment type="subcellular location">
    <subcellularLocation>
        <location evidence="1">Plastid</location>
        <location evidence="1">Chloroplast thylakoid membrane</location>
        <topology evidence="1">Single-pass membrane protein</topology>
    </subcellularLocation>
</comment>
<comment type="RNA editing">
    <location>
        <position position="2" evidence="2"/>
    </location>
    <location>
        <position position="15" evidence="2"/>
    </location>
</comment>
<comment type="similarity">
    <text evidence="1">Belongs to the PetL family.</text>
</comment>